<feature type="chain" id="PRO_0000136538" description="Phosphoheptose isomerase">
    <location>
        <begin position="1"/>
        <end position="197"/>
    </location>
</feature>
<feature type="domain" description="SIS" evidence="1">
    <location>
        <begin position="37"/>
        <end position="197"/>
    </location>
</feature>
<feature type="binding site" evidence="1">
    <location>
        <begin position="52"/>
        <end position="54"/>
    </location>
    <ligand>
        <name>substrate</name>
    </ligand>
</feature>
<feature type="binding site" evidence="1">
    <location>
        <position position="61"/>
    </location>
    <ligand>
        <name>Zn(2+)</name>
        <dbReference type="ChEBI" id="CHEBI:29105"/>
    </ligand>
</feature>
<feature type="binding site" evidence="1">
    <location>
        <position position="65"/>
    </location>
    <ligand>
        <name>substrate</name>
    </ligand>
</feature>
<feature type="binding site" evidence="1">
    <location>
        <position position="65"/>
    </location>
    <ligand>
        <name>Zn(2+)</name>
        <dbReference type="ChEBI" id="CHEBI:29105"/>
    </ligand>
</feature>
<feature type="binding site" evidence="1">
    <location>
        <begin position="94"/>
        <end position="95"/>
    </location>
    <ligand>
        <name>substrate</name>
    </ligand>
</feature>
<feature type="binding site" evidence="1">
    <location>
        <begin position="120"/>
        <end position="122"/>
    </location>
    <ligand>
        <name>substrate</name>
    </ligand>
</feature>
<feature type="binding site" evidence="1">
    <location>
        <position position="125"/>
    </location>
    <ligand>
        <name>substrate</name>
    </ligand>
</feature>
<feature type="binding site" evidence="1">
    <location>
        <position position="175"/>
    </location>
    <ligand>
        <name>substrate</name>
    </ligand>
</feature>
<feature type="binding site" evidence="1">
    <location>
        <position position="175"/>
    </location>
    <ligand>
        <name>Zn(2+)</name>
        <dbReference type="ChEBI" id="CHEBI:29105"/>
    </ligand>
</feature>
<feature type="binding site" evidence="1">
    <location>
        <position position="183"/>
    </location>
    <ligand>
        <name>Zn(2+)</name>
        <dbReference type="ChEBI" id="CHEBI:29105"/>
    </ligand>
</feature>
<dbReference type="EC" id="5.3.1.28" evidence="1"/>
<dbReference type="EMBL" id="AL157959">
    <property type="protein sequence ID" value="CAM07640.1"/>
    <property type="molecule type" value="Genomic_DNA"/>
</dbReference>
<dbReference type="PIR" id="H81007">
    <property type="entry name" value="H81007"/>
</dbReference>
<dbReference type="RefSeq" id="WP_002219976.1">
    <property type="nucleotide sequence ID" value="NC_003116.1"/>
</dbReference>
<dbReference type="SMR" id="P0A0Y5"/>
<dbReference type="EnsemblBacteria" id="CAM07640">
    <property type="protein sequence ID" value="CAM07640"/>
    <property type="gene ID" value="NMA0340"/>
</dbReference>
<dbReference type="KEGG" id="nma:NMA0340"/>
<dbReference type="HOGENOM" id="CLU_080999_4_0_4"/>
<dbReference type="BRENDA" id="5.3.1.28">
    <property type="organism ID" value="3593"/>
</dbReference>
<dbReference type="UniPathway" id="UPA00041">
    <property type="reaction ID" value="UER00436"/>
</dbReference>
<dbReference type="UniPathway" id="UPA00976"/>
<dbReference type="Proteomes" id="UP000000626">
    <property type="component" value="Chromosome"/>
</dbReference>
<dbReference type="GO" id="GO:0005737">
    <property type="term" value="C:cytoplasm"/>
    <property type="evidence" value="ECO:0007669"/>
    <property type="project" value="UniProtKB-SubCell"/>
</dbReference>
<dbReference type="GO" id="GO:0097367">
    <property type="term" value="F:carbohydrate derivative binding"/>
    <property type="evidence" value="ECO:0007669"/>
    <property type="project" value="InterPro"/>
</dbReference>
<dbReference type="GO" id="GO:0008968">
    <property type="term" value="F:D-sedoheptulose 7-phosphate isomerase activity"/>
    <property type="evidence" value="ECO:0007669"/>
    <property type="project" value="UniProtKB-UniRule"/>
</dbReference>
<dbReference type="GO" id="GO:0008270">
    <property type="term" value="F:zinc ion binding"/>
    <property type="evidence" value="ECO:0007669"/>
    <property type="project" value="UniProtKB-UniRule"/>
</dbReference>
<dbReference type="GO" id="GO:0005975">
    <property type="term" value="P:carbohydrate metabolic process"/>
    <property type="evidence" value="ECO:0007669"/>
    <property type="project" value="UniProtKB-UniRule"/>
</dbReference>
<dbReference type="GO" id="GO:2001061">
    <property type="term" value="P:D-glycero-D-manno-heptose 7-phosphate biosynthetic process"/>
    <property type="evidence" value="ECO:0007669"/>
    <property type="project" value="UniProtKB-UniPathway"/>
</dbReference>
<dbReference type="CDD" id="cd05006">
    <property type="entry name" value="SIS_GmhA"/>
    <property type="match status" value="1"/>
</dbReference>
<dbReference type="Gene3D" id="3.40.50.10490">
    <property type="entry name" value="Glucose-6-phosphate isomerase like protein, domain 1"/>
    <property type="match status" value="1"/>
</dbReference>
<dbReference type="HAMAP" id="MF_00067">
    <property type="entry name" value="GmhA"/>
    <property type="match status" value="1"/>
</dbReference>
<dbReference type="InterPro" id="IPR035461">
    <property type="entry name" value="GmhA/DiaA"/>
</dbReference>
<dbReference type="InterPro" id="IPR004515">
    <property type="entry name" value="Phosphoheptose_Isoase"/>
</dbReference>
<dbReference type="InterPro" id="IPR001347">
    <property type="entry name" value="SIS_dom"/>
</dbReference>
<dbReference type="InterPro" id="IPR046348">
    <property type="entry name" value="SIS_dom_sf"/>
</dbReference>
<dbReference type="InterPro" id="IPR050099">
    <property type="entry name" value="SIS_GmhA/DiaA_subfam"/>
</dbReference>
<dbReference type="NCBIfam" id="TIGR00441">
    <property type="entry name" value="gmhA"/>
    <property type="match status" value="1"/>
</dbReference>
<dbReference type="NCBIfam" id="NF010546">
    <property type="entry name" value="PRK13936.1"/>
    <property type="match status" value="1"/>
</dbReference>
<dbReference type="PANTHER" id="PTHR30390:SF6">
    <property type="entry name" value="DNAA INITIATOR-ASSOCIATING PROTEIN DIAA"/>
    <property type="match status" value="1"/>
</dbReference>
<dbReference type="PANTHER" id="PTHR30390">
    <property type="entry name" value="SEDOHEPTULOSE 7-PHOSPHATE ISOMERASE / DNAA INITIATOR-ASSOCIATING FACTOR FOR REPLICATION INITIATION"/>
    <property type="match status" value="1"/>
</dbReference>
<dbReference type="Pfam" id="PF13580">
    <property type="entry name" value="SIS_2"/>
    <property type="match status" value="1"/>
</dbReference>
<dbReference type="SUPFAM" id="SSF53697">
    <property type="entry name" value="SIS domain"/>
    <property type="match status" value="1"/>
</dbReference>
<dbReference type="PROSITE" id="PS51464">
    <property type="entry name" value="SIS"/>
    <property type="match status" value="1"/>
</dbReference>
<evidence type="ECO:0000255" key="1">
    <source>
        <dbReference type="HAMAP-Rule" id="MF_00067"/>
    </source>
</evidence>
<sequence length="197" mass="20989">MTTLQERVAAHFAESIRAKQEAGKVLVEPTVQAAELMLQCLMNDGKILACGNGGSAADAQHFAAEMTGRFEKERMELAAVALTTDTSALTAIGNDYGFDHVFSKQVRALGRAGDVLVGISTSGNSANVIEAVKAAHERDMHVIALTGRDGGKIAAILKDTDVLLNVPHPRTARIQENHILLIHAMCDCIDSVLLEGM</sequence>
<gene>
    <name evidence="1" type="primary">gmhA</name>
    <name type="synonym">lpcA</name>
    <name type="ordered locus">NMA0340</name>
</gene>
<organism>
    <name type="scientific">Neisseria meningitidis serogroup A / serotype 4A (strain DSM 15465 / Z2491)</name>
    <dbReference type="NCBI Taxonomy" id="122587"/>
    <lineage>
        <taxon>Bacteria</taxon>
        <taxon>Pseudomonadati</taxon>
        <taxon>Pseudomonadota</taxon>
        <taxon>Betaproteobacteria</taxon>
        <taxon>Neisseriales</taxon>
        <taxon>Neisseriaceae</taxon>
        <taxon>Neisseria</taxon>
    </lineage>
</organism>
<accession>P0A0Y5</accession>
<accession>A1IPH1</accession>
<accession>Q9JQM1</accession>
<protein>
    <recommendedName>
        <fullName evidence="1">Phosphoheptose isomerase</fullName>
        <ecNumber evidence="1">5.3.1.28</ecNumber>
    </recommendedName>
    <alternativeName>
        <fullName evidence="1">Sedoheptulose 7-phosphate isomerase</fullName>
    </alternativeName>
</protein>
<reference key="1">
    <citation type="journal article" date="2000" name="Nature">
        <title>Complete DNA sequence of a serogroup A strain of Neisseria meningitidis Z2491.</title>
        <authorList>
            <person name="Parkhill J."/>
            <person name="Achtman M."/>
            <person name="James K.D."/>
            <person name="Bentley S.D."/>
            <person name="Churcher C.M."/>
            <person name="Klee S.R."/>
            <person name="Morelli G."/>
            <person name="Basham D."/>
            <person name="Brown D."/>
            <person name="Chillingworth T."/>
            <person name="Davies R.M."/>
            <person name="Davis P."/>
            <person name="Devlin K."/>
            <person name="Feltwell T."/>
            <person name="Hamlin N."/>
            <person name="Holroyd S."/>
            <person name="Jagels K."/>
            <person name="Leather S."/>
            <person name="Moule S."/>
            <person name="Mungall K.L."/>
            <person name="Quail M.A."/>
            <person name="Rajandream M.A."/>
            <person name="Rutherford K.M."/>
            <person name="Simmonds M."/>
            <person name="Skelton J."/>
            <person name="Whitehead S."/>
            <person name="Spratt B.G."/>
            <person name="Barrell B.G."/>
        </authorList>
    </citation>
    <scope>NUCLEOTIDE SEQUENCE [LARGE SCALE GENOMIC DNA]</scope>
    <source>
        <strain>DSM 15465 / Z2491</strain>
    </source>
</reference>
<reference key="2">
    <citation type="journal article" date="2002" name="Microbiology">
        <title>Novel pathways for biosynthesis of nucleotide-activated glycero-manno-heptose precursors of bacterial glycoproteins and cell surface polysaccharides.</title>
        <authorList>
            <person name="Valvano M.A."/>
            <person name="Messner P."/>
            <person name="Kosma P."/>
        </authorList>
    </citation>
    <scope>BIOSYNTHESIS OF NUCLEOTIDE-ACTIVATED GLYCERO-MANNO-HEPTOSE</scope>
</reference>
<name>GMHA_NEIMA</name>
<keyword id="KW-0119">Carbohydrate metabolism</keyword>
<keyword id="KW-0963">Cytoplasm</keyword>
<keyword id="KW-0413">Isomerase</keyword>
<keyword id="KW-0479">Metal-binding</keyword>
<keyword id="KW-0862">Zinc</keyword>
<comment type="function">
    <text evidence="1">Catalyzes the isomerization of sedoheptulose 7-phosphate in D-glycero-D-manno-heptose 7-phosphate.</text>
</comment>
<comment type="catalytic activity">
    <reaction evidence="1">
        <text>2 D-sedoheptulose 7-phosphate = D-glycero-alpha-D-manno-heptose 7-phosphate + D-glycero-beta-D-manno-heptose 7-phosphate</text>
        <dbReference type="Rhea" id="RHEA:27489"/>
        <dbReference type="ChEBI" id="CHEBI:57483"/>
        <dbReference type="ChEBI" id="CHEBI:60203"/>
        <dbReference type="ChEBI" id="CHEBI:60204"/>
        <dbReference type="EC" id="5.3.1.28"/>
    </reaction>
</comment>
<comment type="cofactor">
    <cofactor evidence="1">
        <name>Zn(2+)</name>
        <dbReference type="ChEBI" id="CHEBI:29105"/>
    </cofactor>
    <text evidence="1">Binds 1 zinc ion per subunit.</text>
</comment>
<comment type="pathway">
    <text evidence="1">Carbohydrate biosynthesis; D-glycero-D-manno-heptose 7-phosphate biosynthesis; D-glycero-alpha-D-manno-heptose 7-phosphate and D-glycero-beta-D-manno-heptose 7-phosphate from sedoheptulose 7-phosphate: step 1/1.</text>
</comment>
<comment type="pathway">
    <text>Bacterial outer membrane biogenesis; LOS core biosynthesis.</text>
</comment>
<comment type="subunit">
    <text evidence="1">Homotetramer.</text>
</comment>
<comment type="subcellular location">
    <subcellularLocation>
        <location evidence="1">Cytoplasm</location>
    </subcellularLocation>
</comment>
<comment type="miscellaneous">
    <text evidence="1">The reaction produces a racemic mixture of D-glycero-alpha-D-manno-heptose 7-phosphate and D-glycero-beta-D-manno-heptose 7-phosphate.</text>
</comment>
<comment type="similarity">
    <text evidence="1">Belongs to the SIS family. GmhA subfamily.</text>
</comment>
<proteinExistence type="inferred from homology"/>